<protein>
    <recommendedName>
        <fullName evidence="1">PqqA binding protein</fullName>
    </recommendedName>
    <alternativeName>
        <fullName evidence="1">Coenzyme PQQ synthesis protein D</fullName>
    </alternativeName>
    <alternativeName>
        <fullName evidence="1">Pyrroloquinoline quinone biosynthesis protein D</fullName>
    </alternativeName>
</protein>
<sequence length="92" mass="10300">MSTISRDSCPALRAGVRLQHDRARDQWVLLAPERVVELDDIALVVAQRYDGTQSLAQIAQTLAAEFDADASEIETDVIELTTTLHQKRLLRL</sequence>
<evidence type="ECO:0000255" key="1">
    <source>
        <dbReference type="HAMAP-Rule" id="MF_00655"/>
    </source>
</evidence>
<evidence type="ECO:0007829" key="2">
    <source>
        <dbReference type="PDB" id="3G2B"/>
    </source>
</evidence>
<organism>
    <name type="scientific">Xanthomonas campestris pv. campestris (strain ATCC 33913 / DSM 3586 / NCPPB 528 / LMG 568 / P 25)</name>
    <dbReference type="NCBI Taxonomy" id="190485"/>
    <lineage>
        <taxon>Bacteria</taxon>
        <taxon>Pseudomonadati</taxon>
        <taxon>Pseudomonadota</taxon>
        <taxon>Gammaproteobacteria</taxon>
        <taxon>Lysobacterales</taxon>
        <taxon>Lysobacteraceae</taxon>
        <taxon>Xanthomonas</taxon>
    </lineage>
</organism>
<gene>
    <name evidence="1" type="primary">pqqD</name>
    <name type="ordered locus">XCC2939</name>
</gene>
<feature type="chain" id="PRO_0000219974" description="PqqA binding protein">
    <location>
        <begin position="1"/>
        <end position="92"/>
    </location>
</feature>
<feature type="strand" evidence="2">
    <location>
        <begin position="17"/>
        <end position="21"/>
    </location>
</feature>
<feature type="turn" evidence="2">
    <location>
        <begin position="22"/>
        <end position="25"/>
    </location>
</feature>
<feature type="strand" evidence="2">
    <location>
        <begin position="26"/>
        <end position="30"/>
    </location>
</feature>
<feature type="helix" evidence="2">
    <location>
        <begin position="41"/>
        <end position="48"/>
    </location>
</feature>
<feature type="strand" evidence="2">
    <location>
        <begin position="51"/>
        <end position="53"/>
    </location>
</feature>
<feature type="helix" evidence="2">
    <location>
        <begin position="55"/>
        <end position="65"/>
    </location>
</feature>
<feature type="helix" evidence="2">
    <location>
        <begin position="70"/>
        <end position="86"/>
    </location>
</feature>
<name>PQQD_XANCP</name>
<keyword id="KW-0002">3D-structure</keyword>
<keyword id="KW-0884">PQQ biosynthesis</keyword>
<keyword id="KW-1185">Reference proteome</keyword>
<comment type="function">
    <text evidence="1">Functions as a PqqA binding protein and presents PqqA to PqqE, in the pyrroloquinoline quinone (PQQ) biosynthetic pathway.</text>
</comment>
<comment type="pathway">
    <text evidence="1">Cofactor biosynthesis; pyrroloquinoline quinone biosynthesis.</text>
</comment>
<comment type="subunit">
    <text evidence="1">Monomer. Interacts with PqqE.</text>
</comment>
<comment type="similarity">
    <text evidence="1">Belongs to the PqqD family.</text>
</comment>
<proteinExistence type="evidence at protein level"/>
<accession>Q8P6M8</accession>
<reference key="1">
    <citation type="journal article" date="2002" name="Nature">
        <title>Comparison of the genomes of two Xanthomonas pathogens with differing host specificities.</title>
        <authorList>
            <person name="da Silva A.C.R."/>
            <person name="Ferro J.A."/>
            <person name="Reinach F.C."/>
            <person name="Farah C.S."/>
            <person name="Furlan L.R."/>
            <person name="Quaggio R.B."/>
            <person name="Monteiro-Vitorello C.B."/>
            <person name="Van Sluys M.A."/>
            <person name="Almeida N.F. Jr."/>
            <person name="Alves L.M.C."/>
            <person name="do Amaral A.M."/>
            <person name="Bertolini M.C."/>
            <person name="Camargo L.E.A."/>
            <person name="Camarotte G."/>
            <person name="Cannavan F."/>
            <person name="Cardozo J."/>
            <person name="Chambergo F."/>
            <person name="Ciapina L.P."/>
            <person name="Cicarelli R.M.B."/>
            <person name="Coutinho L.L."/>
            <person name="Cursino-Santos J.R."/>
            <person name="El-Dorry H."/>
            <person name="Faria J.B."/>
            <person name="Ferreira A.J.S."/>
            <person name="Ferreira R.C.C."/>
            <person name="Ferro M.I.T."/>
            <person name="Formighieri E.F."/>
            <person name="Franco M.C."/>
            <person name="Greggio C.C."/>
            <person name="Gruber A."/>
            <person name="Katsuyama A.M."/>
            <person name="Kishi L.T."/>
            <person name="Leite R.P."/>
            <person name="Lemos E.G.M."/>
            <person name="Lemos M.V.F."/>
            <person name="Locali E.C."/>
            <person name="Machado M.A."/>
            <person name="Madeira A.M.B.N."/>
            <person name="Martinez-Rossi N.M."/>
            <person name="Martins E.C."/>
            <person name="Meidanis J."/>
            <person name="Menck C.F.M."/>
            <person name="Miyaki C.Y."/>
            <person name="Moon D.H."/>
            <person name="Moreira L.M."/>
            <person name="Novo M.T.M."/>
            <person name="Okura V.K."/>
            <person name="Oliveira M.C."/>
            <person name="Oliveira V.R."/>
            <person name="Pereira H.A."/>
            <person name="Rossi A."/>
            <person name="Sena J.A.D."/>
            <person name="Silva C."/>
            <person name="de Souza R.F."/>
            <person name="Spinola L.A.F."/>
            <person name="Takita M.A."/>
            <person name="Tamura R.E."/>
            <person name="Teixeira E.C."/>
            <person name="Tezza R.I.D."/>
            <person name="Trindade dos Santos M."/>
            <person name="Truffi D."/>
            <person name="Tsai S.M."/>
            <person name="White F.F."/>
            <person name="Setubal J.C."/>
            <person name="Kitajima J.P."/>
        </authorList>
    </citation>
    <scope>NUCLEOTIDE SEQUENCE [LARGE SCALE GENOMIC DNA]</scope>
    <source>
        <strain>ATCC 33913 / DSM 3586 / NCPPB 528 / LMG 568 / P 25</strain>
    </source>
</reference>
<dbReference type="EMBL" id="AE008922">
    <property type="protein sequence ID" value="AAM42211.1"/>
    <property type="molecule type" value="Genomic_DNA"/>
</dbReference>
<dbReference type="RefSeq" id="NP_638287.1">
    <property type="nucleotide sequence ID" value="NC_003902.1"/>
</dbReference>
<dbReference type="RefSeq" id="WP_011038062.1">
    <property type="nucleotide sequence ID" value="NC_003902.1"/>
</dbReference>
<dbReference type="PDB" id="3G2B">
    <property type="method" value="X-ray"/>
    <property type="resolution" value="1.66 A"/>
    <property type="chains" value="A=1-92"/>
</dbReference>
<dbReference type="PDBsum" id="3G2B"/>
<dbReference type="SMR" id="Q8P6M8"/>
<dbReference type="STRING" id="190485.XCC2939"/>
<dbReference type="EnsemblBacteria" id="AAM42211">
    <property type="protein sequence ID" value="AAM42211"/>
    <property type="gene ID" value="XCC2939"/>
</dbReference>
<dbReference type="KEGG" id="xcc:XCC2939"/>
<dbReference type="PATRIC" id="fig|190485.4.peg.3143"/>
<dbReference type="eggNOG" id="COG0535">
    <property type="taxonomic scope" value="Bacteria"/>
</dbReference>
<dbReference type="HOGENOM" id="CLU_163864_0_0_6"/>
<dbReference type="OrthoDB" id="7356791at2"/>
<dbReference type="UniPathway" id="UPA00539"/>
<dbReference type="EvolutionaryTrace" id="Q8P6M8"/>
<dbReference type="Proteomes" id="UP000001010">
    <property type="component" value="Chromosome"/>
</dbReference>
<dbReference type="GO" id="GO:0048038">
    <property type="term" value="F:quinone binding"/>
    <property type="evidence" value="ECO:0007669"/>
    <property type="project" value="InterPro"/>
</dbReference>
<dbReference type="GO" id="GO:0018189">
    <property type="term" value="P:pyrroloquinoline quinone biosynthetic process"/>
    <property type="evidence" value="ECO:0007669"/>
    <property type="project" value="UniProtKB-UniRule"/>
</dbReference>
<dbReference type="Gene3D" id="1.10.10.1150">
    <property type="entry name" value="Coenzyme PQQ synthesis protein D (PqqD)"/>
    <property type="match status" value="1"/>
</dbReference>
<dbReference type="HAMAP" id="MF_00655">
    <property type="entry name" value="PQQ_syn_PqqD"/>
    <property type="match status" value="1"/>
</dbReference>
<dbReference type="InterPro" id="IPR008792">
    <property type="entry name" value="PQQD"/>
</dbReference>
<dbReference type="InterPro" id="IPR022479">
    <property type="entry name" value="PqqD_bac"/>
</dbReference>
<dbReference type="InterPro" id="IPR041881">
    <property type="entry name" value="PqqD_sf"/>
</dbReference>
<dbReference type="NCBIfam" id="TIGR03859">
    <property type="entry name" value="PQQ_PqqD"/>
    <property type="match status" value="1"/>
</dbReference>
<dbReference type="Pfam" id="PF05402">
    <property type="entry name" value="PqqD"/>
    <property type="match status" value="1"/>
</dbReference>